<protein>
    <recommendedName>
        <fullName>Outer dense fiber protein 2</fullName>
    </recommendedName>
    <alternativeName>
        <fullName>Cenexin</fullName>
    </alternativeName>
    <alternativeName>
        <fullName>Outer dense fiber of sperm tails protein 2</fullName>
    </alternativeName>
</protein>
<reference key="1">
    <citation type="submission" date="2004-11" db="EMBL/GenBank/DDBJ databases">
        <authorList>
            <consortium name="The German cDNA consortium"/>
        </authorList>
    </citation>
    <scope>NUCLEOTIDE SEQUENCE [LARGE SCALE MRNA]</scope>
    <source>
        <tissue>Kidney</tissue>
    </source>
</reference>
<name>ODFP2_PONAB</name>
<gene>
    <name type="primary">ODF2</name>
</gene>
<evidence type="ECO:0000250" key="1">
    <source>
        <dbReference type="UniProtKB" id="A3KGV1"/>
    </source>
</evidence>
<evidence type="ECO:0000250" key="2">
    <source>
        <dbReference type="UniProtKB" id="Q2MJU7"/>
    </source>
</evidence>
<evidence type="ECO:0000250" key="3">
    <source>
        <dbReference type="UniProtKB" id="Q5BJF6"/>
    </source>
</evidence>
<evidence type="ECO:0000250" key="4">
    <source>
        <dbReference type="UniProtKB" id="Q6AYX5"/>
    </source>
</evidence>
<evidence type="ECO:0000255" key="5"/>
<evidence type="ECO:0000256" key="6">
    <source>
        <dbReference type="SAM" id="MobiDB-lite"/>
    </source>
</evidence>
<evidence type="ECO:0000305" key="7"/>
<proteinExistence type="evidence at transcript level"/>
<feature type="chain" id="PRO_0000299459" description="Outer dense fiber protein 2">
    <location>
        <begin position="1"/>
        <end position="680"/>
    </location>
</feature>
<feature type="region of interest" description="Disordered" evidence="6">
    <location>
        <begin position="27"/>
        <end position="46"/>
    </location>
</feature>
<feature type="region of interest" description="Disordered" evidence="6">
    <location>
        <begin position="387"/>
        <end position="410"/>
    </location>
</feature>
<feature type="region of interest" description="Disordered" evidence="6">
    <location>
        <begin position="632"/>
        <end position="680"/>
    </location>
</feature>
<feature type="coiled-coil region" evidence="5">
    <location>
        <begin position="139"/>
        <end position="212"/>
    </location>
</feature>
<feature type="coiled-coil region" evidence="5">
    <location>
        <begin position="275"/>
        <end position="418"/>
    </location>
</feature>
<feature type="coiled-coil region" evidence="5">
    <location>
        <begin position="456"/>
        <end position="630"/>
    </location>
</feature>
<feature type="modified residue" description="Phosphoserine" evidence="4">
    <location>
        <position position="68"/>
    </location>
</feature>
<feature type="modified residue" description="Phosphoserine" evidence="4">
    <location>
        <position position="69"/>
    </location>
</feature>
<feature type="modified residue" description="Phosphothreonine" evidence="4">
    <location>
        <position position="87"/>
    </location>
</feature>
<feature type="modified residue" description="Phosphoserine; by TSSK4" evidence="1">
    <location>
        <position position="90"/>
    </location>
</feature>
<feature type="modified residue" description="Phosphoserine" evidence="4">
    <location>
        <position position="101"/>
    </location>
</feature>
<feature type="modified residue" description="Phosphoserine" evidence="4">
    <location>
        <position position="104"/>
    </location>
</feature>
<feature type="modified residue" description="Phosphothreonine" evidence="4">
    <location>
        <position position="105"/>
    </location>
</feature>
<feature type="modified residue" description="Phosphoserine" evidence="4">
    <location>
        <position position="110"/>
    </location>
</feature>
<feature type="modified residue" description="Phosphoserine" evidence="4">
    <location>
        <position position="124"/>
    </location>
</feature>
<feature type="modified residue" description="Phosphoserine" evidence="4">
    <location>
        <position position="134"/>
    </location>
</feature>
<feature type="modified residue" description="Phosphothreonine" evidence="3">
    <location>
        <position position="226"/>
    </location>
</feature>
<feature type="modified residue" description="Phosphoserine" evidence="4">
    <location>
        <position position="256"/>
    </location>
</feature>
<feature type="modified residue" description="Phosphoserine" evidence="4">
    <location>
        <position position="627"/>
    </location>
</feature>
<feature type="cross-link" description="Glycyl lysine isopeptide (Lys-Gly) (interchain with G-Cter in SUMO2)" evidence="3">
    <location>
        <position position="133"/>
    </location>
</feature>
<comment type="function">
    <text evidence="3">Seems to be a major component of sperm tail outer dense fibers (ODF). ODFs are filamentous structures located on the outside of the axoneme in the midpiece and principal piece of the mammalian sperm tail and may help to maintain the passive elastic structures and elastic recoil of the sperm tail. May have a modulating influence on sperm motility. Functions as a general scaffold protein that is specifically localized at the distal/subdistal appendages of mother centrioles. Component of the centrosome matrix required for the localization of PLK1 and NIN to the centrosomes. Required for the formation and/or maintenance of normal CETN1 assembly (By similarity).</text>
</comment>
<comment type="subunit">
    <text evidence="1 3">Self-associates. Associates with microtubules and forms a fibrillar structure partially linked to the microtubule network. Interacts via its C-terminus with PLK1. Interacts with ODF1. Interacts with MARK4; the interaction is required for localization of ODF2 to centrioles. Interacts with TSSK4. Interacts with AKNA. Interacts with QRICH2 (By similarity). Interacts with CFAP58 (By similarity). Interacts with BBOF1 (By similarity). Interacts with CCDC38 (By similarity). Interacts with CCDC42 (By similarity).</text>
</comment>
<comment type="subcellular location">
    <subcellularLocation>
        <location evidence="1">Cytoplasm</location>
        <location evidence="1">Cytoskeleton</location>
        <location evidence="1">Microtubule organizing center</location>
        <location evidence="1">Centrosome</location>
    </subcellularLocation>
    <subcellularLocation>
        <location evidence="1">Cell projection</location>
        <location evidence="1">Cilium</location>
    </subcellularLocation>
    <subcellularLocation>
        <location evidence="1">Cytoplasm</location>
        <location evidence="1">Cytoskeleton</location>
        <location evidence="1">Microtubule organizing center</location>
        <location evidence="1">Centrosome</location>
        <location evidence="1">Centriole</location>
    </subcellularLocation>
    <subcellularLocation>
        <location evidence="1">Cytoplasm</location>
        <location evidence="1">Cytoskeleton</location>
        <location evidence="1">Spindle pole</location>
    </subcellularLocation>
    <subcellularLocation>
        <location evidence="1">Cell projection</location>
        <location evidence="1">Cilium</location>
        <location evidence="1">Flagellum</location>
    </subcellularLocation>
    <text evidence="1">Localized at the microtubule organizing centers in interphase and spindle poles in mitosis. Localized at the distal/subdistal appendages of mother centrioles.</text>
</comment>
<comment type="PTM">
    <text evidence="1 2">Tyrosine phosphorylated. Phosphorylated on Ser-90 by TSSK4.</text>
</comment>
<comment type="similarity">
    <text evidence="7">Belongs to the ODF2 family.</text>
</comment>
<accession>Q5R829</accession>
<keyword id="KW-0966">Cell projection</keyword>
<keyword id="KW-0969">Cilium</keyword>
<keyword id="KW-0175">Coiled coil</keyword>
<keyword id="KW-0963">Cytoplasm</keyword>
<keyword id="KW-0206">Cytoskeleton</keyword>
<keyword id="KW-0217">Developmental protein</keyword>
<keyword id="KW-0221">Differentiation</keyword>
<keyword id="KW-0282">Flagellum</keyword>
<keyword id="KW-1017">Isopeptide bond</keyword>
<keyword id="KW-0493">Microtubule</keyword>
<keyword id="KW-0597">Phosphoprotein</keyword>
<keyword id="KW-1185">Reference proteome</keyword>
<keyword id="KW-0744">Spermatogenesis</keyword>
<keyword id="KW-0832">Ubl conjugation</keyword>
<sequence>MKDRSSTPPLHVHVDENTPVHVHIKKLPKPSATSSQKSHKRGMKGDTVNVRRSVRVKTKVPWMPPGKSSARPVGCKWENPPHCLEITPPSSEKLVSVMRLSDLSTEDDDSGHCKMNRYDKKIDSLMNAVGCLKSEVKMQKGERQMAKRFLEERKEELEEVAHELAETEHENTVLRHNIERMKEEKDFTILQKKHLQQEKECLMSKLVEAEMDGAAAAKQVMALKDTIGKLKTEKQMTCTDINTLTRQKELLLQKLSTFGETNRTLRDLLREQHCKEDSERLMEQQGALLKRLAEADSEKARLLLLLRDKDKEVEELLQEIQCEKAQAKTASELSKSMESMRGHLQAQLRSKEAENSRLCMQIKNLERSGNQHKAEVEAIMEQLKELKQKGDRDKESLKKAIRAQKERAEKSEEYAEQLHVQLADKDLYVAEALSTLESWRSRYNQVVKDKGDLELEIIVLNDRVTDLVNQQQTLEEKMREDRDSLVERLHRQTAEYSAFKLENERLKASFAPMEDKLNQAHLEVQQLKASVKNYEGMIDNYKSQVMKTRLEADEVAAQLERCDKENKILKDEMNKEIEAARRQFQSQLADLQQLPDILKITEAKLAECQDQLQGYERKNIDLTAIISDLRSRETGGDQCPEYRVPTGDCQEGGGNPPVPAAARGENTGMWDPGKAVGERH</sequence>
<dbReference type="EMBL" id="CR859926">
    <property type="protein sequence ID" value="CAH92081.1"/>
    <property type="molecule type" value="mRNA"/>
</dbReference>
<dbReference type="RefSeq" id="NP_001126214.1">
    <property type="nucleotide sequence ID" value="NM_001132742.1"/>
</dbReference>
<dbReference type="SMR" id="Q5R829"/>
<dbReference type="STRING" id="9601.ENSPPYP00000022026"/>
<dbReference type="GeneID" id="100173182"/>
<dbReference type="KEGG" id="pon:100173182"/>
<dbReference type="CTD" id="4957"/>
<dbReference type="eggNOG" id="ENOG502QUXQ">
    <property type="taxonomic scope" value="Eukaryota"/>
</dbReference>
<dbReference type="InParanoid" id="Q5R829"/>
<dbReference type="OrthoDB" id="413404at2759"/>
<dbReference type="Proteomes" id="UP000001595">
    <property type="component" value="Unplaced"/>
</dbReference>
<dbReference type="GO" id="GO:0005814">
    <property type="term" value="C:centriole"/>
    <property type="evidence" value="ECO:0007669"/>
    <property type="project" value="UniProtKB-SubCell"/>
</dbReference>
<dbReference type="GO" id="GO:0005813">
    <property type="term" value="C:centrosome"/>
    <property type="evidence" value="ECO:0000250"/>
    <property type="project" value="UniProtKB"/>
</dbReference>
<dbReference type="GO" id="GO:0005737">
    <property type="term" value="C:cytoplasm"/>
    <property type="evidence" value="ECO:0007669"/>
    <property type="project" value="UniProtKB-KW"/>
</dbReference>
<dbReference type="GO" id="GO:0005874">
    <property type="term" value="C:microtubule"/>
    <property type="evidence" value="ECO:0007669"/>
    <property type="project" value="UniProtKB-KW"/>
</dbReference>
<dbReference type="GO" id="GO:0036126">
    <property type="term" value="C:sperm flagellum"/>
    <property type="evidence" value="ECO:0000250"/>
    <property type="project" value="UniProtKB"/>
</dbReference>
<dbReference type="GO" id="GO:0097225">
    <property type="term" value="C:sperm midpiece"/>
    <property type="evidence" value="ECO:0000250"/>
    <property type="project" value="UniProtKB"/>
</dbReference>
<dbReference type="GO" id="GO:0097228">
    <property type="term" value="C:sperm principal piece"/>
    <property type="evidence" value="ECO:0000250"/>
    <property type="project" value="UniProtKB"/>
</dbReference>
<dbReference type="GO" id="GO:0000922">
    <property type="term" value="C:spindle pole"/>
    <property type="evidence" value="ECO:0007669"/>
    <property type="project" value="UniProtKB-SubCell"/>
</dbReference>
<dbReference type="GO" id="GO:0030154">
    <property type="term" value="P:cell differentiation"/>
    <property type="evidence" value="ECO:0007669"/>
    <property type="project" value="UniProtKB-KW"/>
</dbReference>
<dbReference type="GO" id="GO:1902017">
    <property type="term" value="P:regulation of cilium assembly"/>
    <property type="evidence" value="ECO:0007669"/>
    <property type="project" value="TreeGrafter"/>
</dbReference>
<dbReference type="GO" id="GO:0007283">
    <property type="term" value="P:spermatogenesis"/>
    <property type="evidence" value="ECO:0007669"/>
    <property type="project" value="UniProtKB-KW"/>
</dbReference>
<dbReference type="InterPro" id="IPR026099">
    <property type="entry name" value="Odf2-rel"/>
</dbReference>
<dbReference type="PANTHER" id="PTHR23162">
    <property type="entry name" value="OUTER DENSE FIBER OF SPERM TAILS 2"/>
    <property type="match status" value="1"/>
</dbReference>
<dbReference type="PANTHER" id="PTHR23162:SF8">
    <property type="entry name" value="OUTER DENSE FIBER PROTEIN 2"/>
    <property type="match status" value="1"/>
</dbReference>
<organism>
    <name type="scientific">Pongo abelii</name>
    <name type="common">Sumatran orangutan</name>
    <name type="synonym">Pongo pygmaeus abelii</name>
    <dbReference type="NCBI Taxonomy" id="9601"/>
    <lineage>
        <taxon>Eukaryota</taxon>
        <taxon>Metazoa</taxon>
        <taxon>Chordata</taxon>
        <taxon>Craniata</taxon>
        <taxon>Vertebrata</taxon>
        <taxon>Euteleostomi</taxon>
        <taxon>Mammalia</taxon>
        <taxon>Eutheria</taxon>
        <taxon>Euarchontoglires</taxon>
        <taxon>Primates</taxon>
        <taxon>Haplorrhini</taxon>
        <taxon>Catarrhini</taxon>
        <taxon>Hominidae</taxon>
        <taxon>Pongo</taxon>
    </lineage>
</organism>